<dbReference type="GO" id="GO:0005576">
    <property type="term" value="C:extracellular region"/>
    <property type="evidence" value="ECO:0007669"/>
    <property type="project" value="UniProtKB-SubCell"/>
</dbReference>
<dbReference type="GO" id="GO:0007218">
    <property type="term" value="P:neuropeptide signaling pathway"/>
    <property type="evidence" value="ECO:0007669"/>
    <property type="project" value="UniProtKB-KW"/>
</dbReference>
<dbReference type="InterPro" id="IPR013206">
    <property type="entry name" value="Lem_TRP"/>
</dbReference>
<dbReference type="Pfam" id="PF08262">
    <property type="entry name" value="Lem_TRP"/>
    <property type="match status" value="1"/>
</dbReference>
<name>TRP8_RHYMA</name>
<protein>
    <recommendedName>
        <fullName>Tachykinin-related peptide 8</fullName>
        <shortName>LemTRP 8</shortName>
    </recommendedName>
</protein>
<keyword id="KW-0027">Amidation</keyword>
<keyword id="KW-0903">Direct protein sequencing</keyword>
<keyword id="KW-0527">Neuropeptide</keyword>
<keyword id="KW-0964">Secreted</keyword>
<feature type="peptide" id="PRO_0000044443" description="Tachykinin-related peptide 8">
    <location>
        <begin position="1"/>
        <end position="10"/>
    </location>
</feature>
<feature type="modified residue" description="Arginine amide" evidence="1">
    <location>
        <position position="10"/>
    </location>
</feature>
<comment type="function">
    <text>Myoactive peptide. Increases the amplitude and frequency of spontaneous contractions and tonus of hindgut muscle.</text>
</comment>
<comment type="subcellular location">
    <subcellularLocation>
        <location>Secreted</location>
    </subcellularLocation>
</comment>
<comment type="tissue specificity">
    <text>Brain.</text>
</comment>
<comment type="mass spectrometry"/>
<accession>P81740</accession>
<proteinExistence type="evidence at protein level"/>
<reference key="1">
    <citation type="journal article" date="1997" name="Peptides">
        <title>Seven tachykinin-related peptides isolated from the brain of the madeira cockroach; evidence for tissue-specific expression of isoforms.</title>
        <authorList>
            <person name="Muren J.E."/>
            <person name="Naessel D.R."/>
        </authorList>
    </citation>
    <scope>PROTEIN SEQUENCE</scope>
    <scope>AMIDATION AT ARG-10</scope>
    <scope>MASS SPECTROMETRY</scope>
    <source>
        <tissue>Brain</tissue>
    </source>
</reference>
<evidence type="ECO:0000269" key="1">
    <source>
    </source>
</evidence>
<sequence>GPSMGFHGMR</sequence>
<organism>
    <name type="scientific">Rhyparobia maderae</name>
    <name type="common">Madeira cockroach</name>
    <name type="synonym">Leucophaea maderae</name>
    <dbReference type="NCBI Taxonomy" id="36963"/>
    <lineage>
        <taxon>Eukaryota</taxon>
        <taxon>Metazoa</taxon>
        <taxon>Ecdysozoa</taxon>
        <taxon>Arthropoda</taxon>
        <taxon>Hexapoda</taxon>
        <taxon>Insecta</taxon>
        <taxon>Pterygota</taxon>
        <taxon>Neoptera</taxon>
        <taxon>Polyneoptera</taxon>
        <taxon>Dictyoptera</taxon>
        <taxon>Blattodea</taxon>
        <taxon>Blaberoidea</taxon>
        <taxon>Blaberidae</taxon>
        <taxon>Oxyhaloinae</taxon>
        <taxon>Rhyparobia</taxon>
    </lineage>
</organism>